<dbReference type="EMBL" id="CR954253">
    <property type="protein sequence ID" value="CAI97539.1"/>
    <property type="molecule type" value="Genomic_DNA"/>
</dbReference>
<dbReference type="RefSeq" id="WP_003623502.1">
    <property type="nucleotide sequence ID" value="NZ_JQAV01000001.1"/>
</dbReference>
<dbReference type="SMR" id="Q1GAW4"/>
<dbReference type="STRING" id="390333.Ldb0712"/>
<dbReference type="KEGG" id="ldb:Ldb0712"/>
<dbReference type="PATRIC" id="fig|390333.13.peg.89"/>
<dbReference type="eggNOG" id="COG0355">
    <property type="taxonomic scope" value="Bacteria"/>
</dbReference>
<dbReference type="HOGENOM" id="CLU_084338_1_0_9"/>
<dbReference type="BioCyc" id="LDEL390333:LDB_RS03100-MONOMER"/>
<dbReference type="Proteomes" id="UP000001259">
    <property type="component" value="Chromosome"/>
</dbReference>
<dbReference type="GO" id="GO:0005886">
    <property type="term" value="C:plasma membrane"/>
    <property type="evidence" value="ECO:0007669"/>
    <property type="project" value="UniProtKB-SubCell"/>
</dbReference>
<dbReference type="GO" id="GO:0045259">
    <property type="term" value="C:proton-transporting ATP synthase complex"/>
    <property type="evidence" value="ECO:0007669"/>
    <property type="project" value="UniProtKB-KW"/>
</dbReference>
<dbReference type="GO" id="GO:0005524">
    <property type="term" value="F:ATP binding"/>
    <property type="evidence" value="ECO:0007669"/>
    <property type="project" value="UniProtKB-UniRule"/>
</dbReference>
<dbReference type="GO" id="GO:0046933">
    <property type="term" value="F:proton-transporting ATP synthase activity, rotational mechanism"/>
    <property type="evidence" value="ECO:0007669"/>
    <property type="project" value="UniProtKB-UniRule"/>
</dbReference>
<dbReference type="CDD" id="cd12152">
    <property type="entry name" value="F1-ATPase_delta"/>
    <property type="match status" value="1"/>
</dbReference>
<dbReference type="Gene3D" id="1.20.5.440">
    <property type="entry name" value="ATP synthase delta/epsilon subunit, C-terminal domain"/>
    <property type="match status" value="1"/>
</dbReference>
<dbReference type="Gene3D" id="2.60.15.10">
    <property type="entry name" value="F0F1 ATP synthase delta/epsilon subunit, N-terminal"/>
    <property type="match status" value="1"/>
</dbReference>
<dbReference type="HAMAP" id="MF_00530">
    <property type="entry name" value="ATP_synth_epsil_bac"/>
    <property type="match status" value="1"/>
</dbReference>
<dbReference type="InterPro" id="IPR036794">
    <property type="entry name" value="ATP_F1_dsu/esu_C_sf"/>
</dbReference>
<dbReference type="InterPro" id="IPR001469">
    <property type="entry name" value="ATP_synth_F1_dsu/esu"/>
</dbReference>
<dbReference type="InterPro" id="IPR020546">
    <property type="entry name" value="ATP_synth_F1_dsu/esu_N"/>
</dbReference>
<dbReference type="InterPro" id="IPR020547">
    <property type="entry name" value="ATP_synth_F1_esu_C"/>
</dbReference>
<dbReference type="InterPro" id="IPR036771">
    <property type="entry name" value="ATPsynth_dsu/esu_N"/>
</dbReference>
<dbReference type="NCBIfam" id="TIGR01216">
    <property type="entry name" value="ATP_synt_epsi"/>
    <property type="match status" value="1"/>
</dbReference>
<dbReference type="NCBIfam" id="NF001846">
    <property type="entry name" value="PRK00571.1-3"/>
    <property type="match status" value="1"/>
</dbReference>
<dbReference type="PANTHER" id="PTHR13822">
    <property type="entry name" value="ATP SYNTHASE DELTA/EPSILON CHAIN"/>
    <property type="match status" value="1"/>
</dbReference>
<dbReference type="PANTHER" id="PTHR13822:SF10">
    <property type="entry name" value="ATP SYNTHASE EPSILON CHAIN, CHLOROPLASTIC"/>
    <property type="match status" value="1"/>
</dbReference>
<dbReference type="Pfam" id="PF00401">
    <property type="entry name" value="ATP-synt_DE"/>
    <property type="match status" value="1"/>
</dbReference>
<dbReference type="Pfam" id="PF02823">
    <property type="entry name" value="ATP-synt_DE_N"/>
    <property type="match status" value="1"/>
</dbReference>
<dbReference type="SUPFAM" id="SSF46604">
    <property type="entry name" value="Epsilon subunit of F1F0-ATP synthase C-terminal domain"/>
    <property type="match status" value="1"/>
</dbReference>
<dbReference type="SUPFAM" id="SSF51344">
    <property type="entry name" value="Epsilon subunit of F1F0-ATP synthase N-terminal domain"/>
    <property type="match status" value="1"/>
</dbReference>
<gene>
    <name evidence="1" type="primary">atpC</name>
    <name type="ordered locus">Ldb0712</name>
</gene>
<accession>Q1GAW4</accession>
<protein>
    <recommendedName>
        <fullName evidence="1">ATP synthase epsilon chain</fullName>
    </recommendedName>
    <alternativeName>
        <fullName evidence="1">ATP synthase F1 sector epsilon subunit</fullName>
    </alternativeName>
    <alternativeName>
        <fullName evidence="1">F-ATPase epsilon subunit</fullName>
    </alternativeName>
</protein>
<proteinExistence type="inferred from homology"/>
<sequence length="146" mass="16227">MAEAEKLFKINIVTPNGLIYSHRGSSVSMRAIDGDRQILYNHLPILTPLTIGEVRVQRGADVDHKVDHIAVSGGIIEFANNVATIIADNAERARNIDLSRAEAAKQRAEAHITEAKEKHDEQLLERAQIALRRAVNRIHVYGALHK</sequence>
<organism>
    <name type="scientific">Lactobacillus delbrueckii subsp. bulgaricus (strain ATCC 11842 / DSM 20081 / BCRC 10696 / JCM 1002 / NBRC 13953 / NCIMB 11778 / NCTC 12712 / WDCM 00102 / Lb 14)</name>
    <dbReference type="NCBI Taxonomy" id="390333"/>
    <lineage>
        <taxon>Bacteria</taxon>
        <taxon>Bacillati</taxon>
        <taxon>Bacillota</taxon>
        <taxon>Bacilli</taxon>
        <taxon>Lactobacillales</taxon>
        <taxon>Lactobacillaceae</taxon>
        <taxon>Lactobacillus</taxon>
    </lineage>
</organism>
<name>ATPE_LACDA</name>
<evidence type="ECO:0000255" key="1">
    <source>
        <dbReference type="HAMAP-Rule" id="MF_00530"/>
    </source>
</evidence>
<reference key="1">
    <citation type="journal article" date="2006" name="Proc. Natl. Acad. Sci. U.S.A.">
        <title>The complete genome sequence of Lactobacillus bulgaricus reveals extensive and ongoing reductive evolution.</title>
        <authorList>
            <person name="van de Guchte M."/>
            <person name="Penaud S."/>
            <person name="Grimaldi C."/>
            <person name="Barbe V."/>
            <person name="Bryson K."/>
            <person name="Nicolas P."/>
            <person name="Robert C."/>
            <person name="Oztas S."/>
            <person name="Mangenot S."/>
            <person name="Couloux A."/>
            <person name="Loux V."/>
            <person name="Dervyn R."/>
            <person name="Bossy R."/>
            <person name="Bolotin A."/>
            <person name="Batto J.-M."/>
            <person name="Walunas T."/>
            <person name="Gibrat J.-F."/>
            <person name="Bessieres P."/>
            <person name="Weissenbach J."/>
            <person name="Ehrlich S.D."/>
            <person name="Maguin E."/>
        </authorList>
    </citation>
    <scope>NUCLEOTIDE SEQUENCE [LARGE SCALE GENOMIC DNA]</scope>
    <source>
        <strain>ATCC 11842 / DSM 20081 / BCRC 10696 / JCM 1002 / NBRC 13953 / NCIMB 11778 / NCTC 12712 / WDCM 00102 / Lb 14</strain>
    </source>
</reference>
<comment type="function">
    <text evidence="1">Produces ATP from ADP in the presence of a proton gradient across the membrane.</text>
</comment>
<comment type="subunit">
    <text>F-type ATPases have 2 components, CF(1) - the catalytic core - and CF(0) - the membrane proton channel. CF(1) has five subunits: alpha(3), beta(3), gamma(1), delta(1), epsilon(1). CF(0) has three main subunits: a, b and c.</text>
</comment>
<comment type="subcellular location">
    <subcellularLocation>
        <location evidence="1">Cell membrane</location>
        <topology evidence="1">Peripheral membrane protein</topology>
    </subcellularLocation>
</comment>
<comment type="similarity">
    <text evidence="1">Belongs to the ATPase epsilon chain family.</text>
</comment>
<feature type="chain" id="PRO_0000265827" description="ATP synthase epsilon chain">
    <location>
        <begin position="1"/>
        <end position="146"/>
    </location>
</feature>
<keyword id="KW-0066">ATP synthesis</keyword>
<keyword id="KW-1003">Cell membrane</keyword>
<keyword id="KW-0139">CF(1)</keyword>
<keyword id="KW-0375">Hydrogen ion transport</keyword>
<keyword id="KW-0406">Ion transport</keyword>
<keyword id="KW-0472">Membrane</keyword>
<keyword id="KW-1185">Reference proteome</keyword>
<keyword id="KW-0813">Transport</keyword>